<comment type="function">
    <text evidence="1 2 3">Hormone found in the sinus gland of isopods and decapods which controls the blood sugar level. Has a secretagogue action over the amylase released from the midgut gland. May act as a stress hormone and may be involved in the control of molting and reproduction.</text>
</comment>
<comment type="subcellular location">
    <subcellularLocation>
        <location evidence="2 3">Secreted</location>
    </subcellularLocation>
</comment>
<comment type="tissue specificity">
    <text evidence="2 3">Produced by the medulla terminalis X-organ in the eyestalks and transported to the sinus gland where they are stored and released.</text>
</comment>
<comment type="mass spectrometry"/>
<comment type="similarity">
    <text evidence="3">Belongs to the arthropod CHH/MIH/GIH/VIH hormone family.</text>
</comment>
<protein>
    <recommendedName>
        <fullName>Crustacean hyperglycemic hormone</fullName>
        <shortName>CHH</shortName>
    </recommendedName>
</protein>
<keyword id="KW-0027">Amidation</keyword>
<keyword id="KW-0119">Carbohydrate metabolism</keyword>
<keyword id="KW-0208">D-amino acid</keyword>
<keyword id="KW-0903">Direct protein sequencing</keyword>
<keyword id="KW-1015">Disulfide bond</keyword>
<keyword id="KW-0313">Glucose metabolism</keyword>
<keyword id="KW-0372">Hormone</keyword>
<keyword id="KW-0527">Neuropeptide</keyword>
<keyword id="KW-0873">Pyrrolidone carboxylic acid</keyword>
<keyword id="KW-0964">Secreted</keyword>
<organism evidence="3">
    <name type="scientific">Astacus astacus</name>
    <name type="common">Noble crayfish</name>
    <name type="synonym">Astacus fluviatilis</name>
    <dbReference type="NCBI Taxonomy" id="6715"/>
    <lineage>
        <taxon>Eukaryota</taxon>
        <taxon>Metazoa</taxon>
        <taxon>Ecdysozoa</taxon>
        <taxon>Arthropoda</taxon>
        <taxon>Crustacea</taxon>
        <taxon>Multicrustacea</taxon>
        <taxon>Malacostraca</taxon>
        <taxon>Eumalacostraca</taxon>
        <taxon>Eucarida</taxon>
        <taxon>Decapoda</taxon>
        <taxon>Pleocyemata</taxon>
        <taxon>Astacidea</taxon>
        <taxon>Astacoidea</taxon>
        <taxon>Astacidae</taxon>
        <taxon>Astacus</taxon>
    </lineage>
</organism>
<dbReference type="SMR" id="P83800"/>
<dbReference type="GO" id="GO:0005576">
    <property type="term" value="C:extracellular region"/>
    <property type="evidence" value="ECO:0007669"/>
    <property type="project" value="UniProtKB-SubCell"/>
</dbReference>
<dbReference type="GO" id="GO:0005184">
    <property type="term" value="F:neuropeptide hormone activity"/>
    <property type="evidence" value="ECO:0007669"/>
    <property type="project" value="InterPro"/>
</dbReference>
<dbReference type="GO" id="GO:0007623">
    <property type="term" value="P:circadian rhythm"/>
    <property type="evidence" value="ECO:0007669"/>
    <property type="project" value="TreeGrafter"/>
</dbReference>
<dbReference type="GO" id="GO:0006006">
    <property type="term" value="P:glucose metabolic process"/>
    <property type="evidence" value="ECO:0007669"/>
    <property type="project" value="UniProtKB-KW"/>
</dbReference>
<dbReference type="GO" id="GO:0007218">
    <property type="term" value="P:neuropeptide signaling pathway"/>
    <property type="evidence" value="ECO:0007669"/>
    <property type="project" value="UniProtKB-KW"/>
</dbReference>
<dbReference type="Gene3D" id="1.10.2010.10">
    <property type="entry name" value="Crustacean CHH/MIH/GIH neurohormone"/>
    <property type="match status" value="1"/>
</dbReference>
<dbReference type="InterPro" id="IPR018251">
    <property type="entry name" value="Crust_neurhormone_CS"/>
</dbReference>
<dbReference type="InterPro" id="IPR031098">
    <property type="entry name" value="Crust_neurohorm"/>
</dbReference>
<dbReference type="InterPro" id="IPR035957">
    <property type="entry name" value="Crust_neurohorm_sf"/>
</dbReference>
<dbReference type="InterPro" id="IPR001166">
    <property type="entry name" value="Hyperglycemic"/>
</dbReference>
<dbReference type="InterPro" id="IPR000346">
    <property type="entry name" value="Hyperglycemic1"/>
</dbReference>
<dbReference type="PANTHER" id="PTHR35981">
    <property type="entry name" value="ION TRANSPORT PEPTIDE, ISOFORM C"/>
    <property type="match status" value="1"/>
</dbReference>
<dbReference type="PANTHER" id="PTHR35981:SF2">
    <property type="entry name" value="ION TRANSPORT PEPTIDE, ISOFORM C"/>
    <property type="match status" value="1"/>
</dbReference>
<dbReference type="Pfam" id="PF01147">
    <property type="entry name" value="Crust_neurohorm"/>
    <property type="match status" value="1"/>
</dbReference>
<dbReference type="PRINTS" id="PR00548">
    <property type="entry name" value="HYPRGLYCEMC1"/>
</dbReference>
<dbReference type="PRINTS" id="PR00550">
    <property type="entry name" value="HYPRGLYCEMIC"/>
</dbReference>
<dbReference type="SUPFAM" id="SSF81778">
    <property type="entry name" value="Crustacean CHH/MIH/GIH neurohormone"/>
    <property type="match status" value="1"/>
</dbReference>
<dbReference type="PROSITE" id="PS01250">
    <property type="entry name" value="CHH_MIH_GIH"/>
    <property type="match status" value="1"/>
</dbReference>
<name>CHH_ASTAS</name>
<evidence type="ECO:0000250" key="1">
    <source>
        <dbReference type="UniProtKB" id="P55845"/>
    </source>
</evidence>
<evidence type="ECO:0000269" key="2">
    <source ref="1"/>
</evidence>
<evidence type="ECO:0000305" key="3"/>
<accession>P83800</accession>
<sequence>QVFDQACKGIYDRAIFKKLDRVCDDCYNLYRKPYVATTCRQNCYANSVFRQCLDDLLLIDVVDEYISGVQIV</sequence>
<proteinExistence type="evidence at protein level"/>
<reference evidence="3" key="1">
    <citation type="submission" date="2004-02" db="UniProtKB">
        <authorList>
            <person name="Schmitz T."/>
            <person name="Bulau P."/>
            <person name="Peter-Katalinic J."/>
            <person name="Keller R."/>
        </authorList>
    </citation>
    <scope>PROTEIN SEQUENCE</scope>
    <scope>FUNCTION</scope>
    <scope>SUBCELLULAR LOCATION</scope>
    <scope>TISSUE SPECIFICITY</scope>
    <scope>MASS SPECTROMETRY</scope>
    <scope>PYROGLUTAMATE FORMATION AT GLN-1</scope>
    <scope>D-AMINO ACID AT PHE-3</scope>
    <scope>AMIDATION AT VAL-72</scope>
    <source>
        <tissue evidence="3">Sinus gland</tissue>
    </source>
</reference>
<feature type="chain" id="PRO_0000209853" description="Crustacean hyperglycemic hormone">
    <location>
        <begin position="1"/>
        <end position="72"/>
    </location>
</feature>
<feature type="modified residue" description="Pyrrolidone carboxylic acid" evidence="2">
    <location>
        <position position="1"/>
    </location>
</feature>
<feature type="modified residue" description="D-phenylalanine" evidence="2">
    <location>
        <position position="3"/>
    </location>
</feature>
<feature type="modified residue" description="Valine amide" evidence="2">
    <location>
        <position position="72"/>
    </location>
</feature>
<feature type="disulfide bond" evidence="1">
    <location>
        <begin position="7"/>
        <end position="43"/>
    </location>
</feature>
<feature type="disulfide bond" evidence="1">
    <location>
        <begin position="23"/>
        <end position="39"/>
    </location>
</feature>
<feature type="disulfide bond" evidence="1">
    <location>
        <begin position="26"/>
        <end position="52"/>
    </location>
</feature>